<dbReference type="EC" id="2.1.1.320" evidence="1"/>
<dbReference type="EMBL" id="CU329670">
    <property type="protein sequence ID" value="CAB16745.2"/>
    <property type="molecule type" value="Genomic_DNA"/>
</dbReference>
<dbReference type="RefSeq" id="NP_593616.2">
    <property type="nucleotide sequence ID" value="NM_001019047.2"/>
</dbReference>
<dbReference type="FunCoup" id="O14138">
    <property type="interactions" value="31"/>
</dbReference>
<dbReference type="STRING" id="284812.O14138"/>
<dbReference type="PaxDb" id="4896-SPAC25A8.03c.1"/>
<dbReference type="EnsemblFungi" id="SPAC25A8.03c.1">
    <property type="protein sequence ID" value="SPAC25A8.03c.1:pep"/>
    <property type="gene ID" value="SPAC25A8.03c"/>
</dbReference>
<dbReference type="KEGG" id="spo:2543202"/>
<dbReference type="PomBase" id="SPAC25A8.03c"/>
<dbReference type="VEuPathDB" id="FungiDB:SPAC25A8.03c"/>
<dbReference type="eggNOG" id="ENOG502QRKD">
    <property type="taxonomic scope" value="Eukaryota"/>
</dbReference>
<dbReference type="HOGENOM" id="CLU_585470_0_0_1"/>
<dbReference type="InParanoid" id="O14138"/>
<dbReference type="PhylomeDB" id="O14138"/>
<dbReference type="PRO" id="PR:O14138"/>
<dbReference type="Proteomes" id="UP000002485">
    <property type="component" value="Chromosome I"/>
</dbReference>
<dbReference type="GO" id="GO:0005739">
    <property type="term" value="C:mitochondrion"/>
    <property type="evidence" value="ECO:0007005"/>
    <property type="project" value="PomBase"/>
</dbReference>
<dbReference type="GO" id="GO:0035243">
    <property type="term" value="F:protein-arginine omega-N symmetric methyltransferase activity"/>
    <property type="evidence" value="ECO:0000318"/>
    <property type="project" value="GO_Central"/>
</dbReference>
<dbReference type="GO" id="GO:0032259">
    <property type="term" value="P:methylation"/>
    <property type="evidence" value="ECO:0007669"/>
    <property type="project" value="UniProtKB-KW"/>
</dbReference>
<dbReference type="GO" id="GO:0033108">
    <property type="term" value="P:mitochondrial respiratory chain complex assembly"/>
    <property type="evidence" value="ECO:0000266"/>
    <property type="project" value="PomBase"/>
</dbReference>
<dbReference type="Gene3D" id="3.40.50.12710">
    <property type="match status" value="1"/>
</dbReference>
<dbReference type="InterPro" id="IPR003788">
    <property type="entry name" value="NDUFAF7"/>
</dbReference>
<dbReference type="InterPro" id="IPR038375">
    <property type="entry name" value="NDUFAF7_sf"/>
</dbReference>
<dbReference type="InterPro" id="IPR029063">
    <property type="entry name" value="SAM-dependent_MTases_sf"/>
</dbReference>
<dbReference type="PANTHER" id="PTHR12049:SF5">
    <property type="entry name" value="PROTEIN ARGININE METHYLTRANSFERASE NDUFAF7 HOMOLOG, MITOCHONDRIAL"/>
    <property type="match status" value="1"/>
</dbReference>
<dbReference type="PANTHER" id="PTHR12049">
    <property type="entry name" value="PROTEIN ARGININE METHYLTRANSFERASE NDUFAF7, MITOCHONDRIAL"/>
    <property type="match status" value="1"/>
</dbReference>
<dbReference type="Pfam" id="PF02636">
    <property type="entry name" value="Methyltransf_28"/>
    <property type="match status" value="1"/>
</dbReference>
<dbReference type="SUPFAM" id="SSF53335">
    <property type="entry name" value="S-adenosyl-L-methionine-dependent methyltransferases"/>
    <property type="match status" value="1"/>
</dbReference>
<gene>
    <name type="ORF">SPAC25A8.03c</name>
    <name type="ORF">SPAC3C7.15c</name>
</gene>
<feature type="chain" id="PRO_0000116736" description="Protein arginine methyltransferase NDUFAF7 homolog, mitochondrial">
    <location>
        <begin position="1"/>
        <end position="467"/>
    </location>
</feature>
<name>NDUF7_SCHPO</name>
<reference key="1">
    <citation type="journal article" date="2002" name="Nature">
        <title>The genome sequence of Schizosaccharomyces pombe.</title>
        <authorList>
            <person name="Wood V."/>
            <person name="Gwilliam R."/>
            <person name="Rajandream M.A."/>
            <person name="Lyne M.H."/>
            <person name="Lyne R."/>
            <person name="Stewart A."/>
            <person name="Sgouros J.G."/>
            <person name="Peat N."/>
            <person name="Hayles J."/>
            <person name="Baker S.G."/>
            <person name="Basham D."/>
            <person name="Bowman S."/>
            <person name="Brooks K."/>
            <person name="Brown D."/>
            <person name="Brown S."/>
            <person name="Chillingworth T."/>
            <person name="Churcher C.M."/>
            <person name="Collins M."/>
            <person name="Connor R."/>
            <person name="Cronin A."/>
            <person name="Davis P."/>
            <person name="Feltwell T."/>
            <person name="Fraser A."/>
            <person name="Gentles S."/>
            <person name="Goble A."/>
            <person name="Hamlin N."/>
            <person name="Harris D.E."/>
            <person name="Hidalgo J."/>
            <person name="Hodgson G."/>
            <person name="Holroyd S."/>
            <person name="Hornsby T."/>
            <person name="Howarth S."/>
            <person name="Huckle E.J."/>
            <person name="Hunt S."/>
            <person name="Jagels K."/>
            <person name="James K.D."/>
            <person name="Jones L."/>
            <person name="Jones M."/>
            <person name="Leather S."/>
            <person name="McDonald S."/>
            <person name="McLean J."/>
            <person name="Mooney P."/>
            <person name="Moule S."/>
            <person name="Mungall K.L."/>
            <person name="Murphy L.D."/>
            <person name="Niblett D."/>
            <person name="Odell C."/>
            <person name="Oliver K."/>
            <person name="O'Neil S."/>
            <person name="Pearson D."/>
            <person name="Quail M.A."/>
            <person name="Rabbinowitsch E."/>
            <person name="Rutherford K.M."/>
            <person name="Rutter S."/>
            <person name="Saunders D."/>
            <person name="Seeger K."/>
            <person name="Sharp S."/>
            <person name="Skelton J."/>
            <person name="Simmonds M.N."/>
            <person name="Squares R."/>
            <person name="Squares S."/>
            <person name="Stevens K."/>
            <person name="Taylor K."/>
            <person name="Taylor R.G."/>
            <person name="Tivey A."/>
            <person name="Walsh S.V."/>
            <person name="Warren T."/>
            <person name="Whitehead S."/>
            <person name="Woodward J.R."/>
            <person name="Volckaert G."/>
            <person name="Aert R."/>
            <person name="Robben J."/>
            <person name="Grymonprez B."/>
            <person name="Weltjens I."/>
            <person name="Vanstreels E."/>
            <person name="Rieger M."/>
            <person name="Schaefer M."/>
            <person name="Mueller-Auer S."/>
            <person name="Gabel C."/>
            <person name="Fuchs M."/>
            <person name="Duesterhoeft A."/>
            <person name="Fritzc C."/>
            <person name="Holzer E."/>
            <person name="Moestl D."/>
            <person name="Hilbert H."/>
            <person name="Borzym K."/>
            <person name="Langer I."/>
            <person name="Beck A."/>
            <person name="Lehrach H."/>
            <person name="Reinhardt R."/>
            <person name="Pohl T.M."/>
            <person name="Eger P."/>
            <person name="Zimmermann W."/>
            <person name="Wedler H."/>
            <person name="Wambutt R."/>
            <person name="Purnelle B."/>
            <person name="Goffeau A."/>
            <person name="Cadieu E."/>
            <person name="Dreano S."/>
            <person name="Gloux S."/>
            <person name="Lelaure V."/>
            <person name="Mottier S."/>
            <person name="Galibert F."/>
            <person name="Aves S.J."/>
            <person name="Xiang Z."/>
            <person name="Hunt C."/>
            <person name="Moore K."/>
            <person name="Hurst S.M."/>
            <person name="Lucas M."/>
            <person name="Rochet M."/>
            <person name="Gaillardin C."/>
            <person name="Tallada V.A."/>
            <person name="Garzon A."/>
            <person name="Thode G."/>
            <person name="Daga R.R."/>
            <person name="Cruzado L."/>
            <person name="Jimenez J."/>
            <person name="Sanchez M."/>
            <person name="del Rey F."/>
            <person name="Benito J."/>
            <person name="Dominguez A."/>
            <person name="Revuelta J.L."/>
            <person name="Moreno S."/>
            <person name="Armstrong J."/>
            <person name="Forsburg S.L."/>
            <person name="Cerutti L."/>
            <person name="Lowe T."/>
            <person name="McCombie W.R."/>
            <person name="Paulsen I."/>
            <person name="Potashkin J."/>
            <person name="Shpakovski G.V."/>
            <person name="Ussery D."/>
            <person name="Barrell B.G."/>
            <person name="Nurse P."/>
        </authorList>
    </citation>
    <scope>NUCLEOTIDE SEQUENCE [LARGE SCALE GENOMIC DNA]</scope>
    <source>
        <strain>972 / ATCC 24843</strain>
    </source>
</reference>
<reference key="2">
    <citation type="journal article" date="2006" name="Nat. Biotechnol.">
        <title>ORFeome cloning and global analysis of protein localization in the fission yeast Schizosaccharomyces pombe.</title>
        <authorList>
            <person name="Matsuyama A."/>
            <person name="Arai R."/>
            <person name="Yashiroda Y."/>
            <person name="Shirai A."/>
            <person name="Kamata A."/>
            <person name="Sekido S."/>
            <person name="Kobayashi Y."/>
            <person name="Hashimoto A."/>
            <person name="Hamamoto M."/>
            <person name="Hiraoka Y."/>
            <person name="Horinouchi S."/>
            <person name="Yoshida M."/>
        </authorList>
    </citation>
    <scope>SUBCELLULAR LOCATION [LARGE SCALE ANALYSIS]</scope>
</reference>
<sequence>MLNLYMWKLSRSQVYQASLLFGSRVISALAFTNTGLVLHGPRRWYTTDNGFLLHRDSKVSLADYIHESTFDPSKGYYSRLWTGSTNNLSHSVHVLRKEGHKCSKEFDPFLHGIPIPQKALNIYEKQRSLFSESISNYLVLQYKLRYFPVFDLKIYDFHSGTGIIALDILDYLYKNHLEVYGRTTYNIVLHNSWQASWFKSMLTSVRYAKHGDHIDIYVSDPLTWNHTDTNPCFVLALQVISSFGHDLFRQSNGAMMMERCWLGPEHFLNEFFTLNTHQKVSSLNYHLAFQQARINVQQGFSDSRAKRYFSGVKQVFWSFFSTQKLTYYPTKAIRFFERLSKQFPHHSLLLMDVCHVDKSLPGINAPSVLSMENDFSTKKMSSNIGHVFQNETVKYVFPTPLYLVSDILQLATHNRSFICSLPHFLRRWSNEHGRKFFVPVEPSSKNLKVPYSFNNYYVVSSMPTYYY</sequence>
<accession>O14138</accession>
<accession>Q9UTB7</accession>
<evidence type="ECO:0000250" key="1">
    <source>
        <dbReference type="UniProtKB" id="Q7L592"/>
    </source>
</evidence>
<evidence type="ECO:0000269" key="2">
    <source>
    </source>
</evidence>
<evidence type="ECO:0000305" key="3"/>
<protein>
    <recommendedName>
        <fullName evidence="1">Protein arginine methyltransferase NDUFAF7 homolog, mitochondrial</fullName>
        <ecNumber evidence="1">2.1.1.320</ecNumber>
    </recommendedName>
    <alternativeName>
        <fullName>NADH dehydrogenase [ubiquinone] complex I, assembly factor 7 homolog</fullName>
    </alternativeName>
    <alternativeName>
        <fullName>Protein midA homolog</fullName>
    </alternativeName>
</protein>
<organism>
    <name type="scientific">Schizosaccharomyces pombe (strain 972 / ATCC 24843)</name>
    <name type="common">Fission yeast</name>
    <dbReference type="NCBI Taxonomy" id="284812"/>
    <lineage>
        <taxon>Eukaryota</taxon>
        <taxon>Fungi</taxon>
        <taxon>Dikarya</taxon>
        <taxon>Ascomycota</taxon>
        <taxon>Taphrinomycotina</taxon>
        <taxon>Schizosaccharomycetes</taxon>
        <taxon>Schizosaccharomycetales</taxon>
        <taxon>Schizosaccharomycetaceae</taxon>
        <taxon>Schizosaccharomyces</taxon>
    </lineage>
</organism>
<keyword id="KW-0489">Methyltransferase</keyword>
<keyword id="KW-0496">Mitochondrion</keyword>
<keyword id="KW-1185">Reference proteome</keyword>
<keyword id="KW-0808">Transferase</keyword>
<proteinExistence type="inferred from homology"/>
<comment type="function">
    <text evidence="1">Arginine methyltransferase involved in the assembly or stability of mitochondrial NADH:ubiquinone oxidoreductase complex (complex I).</text>
</comment>
<comment type="catalytic activity">
    <reaction evidence="1">
        <text>L-arginyl-[protein] + 2 S-adenosyl-L-methionine = N(omega),N(omega)'-dimethyl-L-arginyl-[protein] + 2 S-adenosyl-L-homocysteine + 2 H(+)</text>
        <dbReference type="Rhea" id="RHEA:48108"/>
        <dbReference type="Rhea" id="RHEA-COMP:10532"/>
        <dbReference type="Rhea" id="RHEA-COMP:11992"/>
        <dbReference type="ChEBI" id="CHEBI:15378"/>
        <dbReference type="ChEBI" id="CHEBI:29965"/>
        <dbReference type="ChEBI" id="CHEBI:57856"/>
        <dbReference type="ChEBI" id="CHEBI:59789"/>
        <dbReference type="ChEBI" id="CHEBI:88221"/>
        <dbReference type="EC" id="2.1.1.320"/>
    </reaction>
</comment>
<comment type="subcellular location">
    <subcellularLocation>
        <location evidence="2">Mitochondrion</location>
    </subcellularLocation>
</comment>
<comment type="similarity">
    <text evidence="3">Belongs to the NDUFAF7 family.</text>
</comment>